<sequence length="1342" mass="150571">MVYSYTEKKRIRKDFGKRPQVLDVPYLLSIQLDSFQKFIEQDPEGQYGLEAAFRSVFPIQSYSGNSELQYVSYRLGEPVFDVQECQIRGVTYSAPLRVKLRLVIYEREAPEGTVKDIKEQEVYMGEIPLMTDNGTFVINGTERVIVSQLHRSPGVFFDSDKGKTHSSGKVLYNARIIPYRGSWLDFEFDPKDNLFVRIDRRRKLPATIILRALNYTTEQILDLFFEKVVFEIRDNKLQMELIPERLRGETASFDIEANGKVYVEKGRRITARHIRQLEKDDIKHIEVPVEYIAGKVVSKDYVDESTGELICAANMELSLDLLAKLSQSGHKRIETLFTNDLDHGPYISETVRVDPTNDRLSALVEIYRMMRPGEPPTREAAESLFENLFFSEDRYDLSAVGRMKFNRSLLRDEIEGSGILSKDDIIDVMKKLIDIRNGKGEVDDIDHLGNRRIRSVGEMAENQFRVGLVRVERAVKERLSLGDLDTLMPQDMINAKPISAAVKEFFGSSQLSQFMDQNNPLSEITHKRRISALGPGGLTRERAGFEVRDVHPTHYGRVCPIETPEGPNIGLINSLSVYAQTNEYGFLETPYRRVVDGVVTDEIHYLSAIEEGNYVIAQANSNLDDEGHFVEDLVTCRSKGESSLFSRDQVDYMDVSTQQVVSVGASLIPFLEHDDANRALMGANMQRQAVPTLRADKPLVGTGMERAVAVDSGVTAVAKRGGTVQYVDASRIVIKVNEDEMYPGEAGIDIYNLTKYTRSNQNTCINQMPCVSLGEPVERGDVLADGPSTDLGELALGQNMRVAFMPWNGYNFEDSILVSERVVQEDRFTTIHIQELACVSRDTKLGPEEITADIPNVGEAALSKLDESGIVYIGAEVTGGDILVGKVTPKGETQLTPEEKLLRAIFGEKASDVKDSSLRVPNGVSGTVIDVQVFTRDGVEKDKRALEIEEMQLKQAKKDLSEELQILEAGLFSRIRAVLVSGGVEAEKLDKLPRDRWLELGLTDEEKQNQLEQLAEQYDELKHEFEKKLEAKRRKITQGDDLAPGVLKIVKVYLAVKRRIQPGDKMAGRHGNKGVISKINPIEDMPYDENGTPVDIVLNPLGVPSRMNIGQILETHLGMAAKGIGDKINAMLKQQQEVAKLREFIQRAYDLGADVRQKVDLSTFSDDEVLRLAENLRKGMPIATPVFDGAKEAEIKELLKLGDLPTSGQITLFDGRTGEQFERPVTVGYMYMLKLNHLVDDKMHARSTGSYSLVTQQPLGGKAQFGGQRFGEMEVWALEAYGAAYTLQEMLTVKSDDVNGRTKMYKNIVDGNHQMEPGMPESFNVLLKEIRSLGINIELEDE</sequence>
<evidence type="ECO:0000255" key="1">
    <source>
        <dbReference type="HAMAP-Rule" id="MF_01321"/>
    </source>
</evidence>
<organism>
    <name type="scientific">Salmonella newport (strain SL254)</name>
    <dbReference type="NCBI Taxonomy" id="423368"/>
    <lineage>
        <taxon>Bacteria</taxon>
        <taxon>Pseudomonadati</taxon>
        <taxon>Pseudomonadota</taxon>
        <taxon>Gammaproteobacteria</taxon>
        <taxon>Enterobacterales</taxon>
        <taxon>Enterobacteriaceae</taxon>
        <taxon>Salmonella</taxon>
    </lineage>
</organism>
<comment type="function">
    <text evidence="1">DNA-dependent RNA polymerase catalyzes the transcription of DNA into RNA using the four ribonucleoside triphosphates as substrates.</text>
</comment>
<comment type="catalytic activity">
    <reaction evidence="1">
        <text>RNA(n) + a ribonucleoside 5'-triphosphate = RNA(n+1) + diphosphate</text>
        <dbReference type="Rhea" id="RHEA:21248"/>
        <dbReference type="Rhea" id="RHEA-COMP:14527"/>
        <dbReference type="Rhea" id="RHEA-COMP:17342"/>
        <dbReference type="ChEBI" id="CHEBI:33019"/>
        <dbReference type="ChEBI" id="CHEBI:61557"/>
        <dbReference type="ChEBI" id="CHEBI:140395"/>
        <dbReference type="EC" id="2.7.7.6"/>
    </reaction>
</comment>
<comment type="subunit">
    <text evidence="1">The RNAP catalytic core consists of 2 alpha, 1 beta, 1 beta' and 1 omega subunit. When a sigma factor is associated with the core the holoenzyme is formed, which can initiate transcription.</text>
</comment>
<comment type="similarity">
    <text evidence="1">Belongs to the RNA polymerase beta chain family.</text>
</comment>
<accession>B4T0Y9</accession>
<reference key="1">
    <citation type="journal article" date="2011" name="J. Bacteriol.">
        <title>Comparative genomics of 28 Salmonella enterica isolates: evidence for CRISPR-mediated adaptive sublineage evolution.</title>
        <authorList>
            <person name="Fricke W.F."/>
            <person name="Mammel M.K."/>
            <person name="McDermott P.F."/>
            <person name="Tartera C."/>
            <person name="White D.G."/>
            <person name="Leclerc J.E."/>
            <person name="Ravel J."/>
            <person name="Cebula T.A."/>
        </authorList>
    </citation>
    <scope>NUCLEOTIDE SEQUENCE [LARGE SCALE GENOMIC DNA]</scope>
    <source>
        <strain>SL254</strain>
    </source>
</reference>
<gene>
    <name evidence="1" type="primary">rpoB</name>
    <name type="ordered locus">SNSL254_A4486</name>
</gene>
<proteinExistence type="inferred from homology"/>
<name>RPOB_SALNS</name>
<protein>
    <recommendedName>
        <fullName evidence="1">DNA-directed RNA polymerase subunit beta</fullName>
        <shortName evidence="1">RNAP subunit beta</shortName>
        <ecNumber evidence="1">2.7.7.6</ecNumber>
    </recommendedName>
    <alternativeName>
        <fullName evidence="1">RNA polymerase subunit beta</fullName>
    </alternativeName>
    <alternativeName>
        <fullName evidence="1">Transcriptase subunit beta</fullName>
    </alternativeName>
</protein>
<feature type="chain" id="PRO_1000141734" description="DNA-directed RNA polymerase subunit beta">
    <location>
        <begin position="1"/>
        <end position="1342"/>
    </location>
</feature>
<keyword id="KW-0240">DNA-directed RNA polymerase</keyword>
<keyword id="KW-0548">Nucleotidyltransferase</keyword>
<keyword id="KW-0804">Transcription</keyword>
<keyword id="KW-0808">Transferase</keyword>
<dbReference type="EC" id="2.7.7.6" evidence="1"/>
<dbReference type="EMBL" id="CP001113">
    <property type="protein sequence ID" value="ACF63381.1"/>
    <property type="molecule type" value="Genomic_DNA"/>
</dbReference>
<dbReference type="RefSeq" id="WP_000263105.1">
    <property type="nucleotide sequence ID" value="NZ_CCMR01000001.1"/>
</dbReference>
<dbReference type="SMR" id="B4T0Y9"/>
<dbReference type="KEGG" id="see:SNSL254_A4486"/>
<dbReference type="HOGENOM" id="CLU_000524_4_0_6"/>
<dbReference type="Proteomes" id="UP000008824">
    <property type="component" value="Chromosome"/>
</dbReference>
<dbReference type="GO" id="GO:0000428">
    <property type="term" value="C:DNA-directed RNA polymerase complex"/>
    <property type="evidence" value="ECO:0007669"/>
    <property type="project" value="UniProtKB-KW"/>
</dbReference>
<dbReference type="GO" id="GO:0003677">
    <property type="term" value="F:DNA binding"/>
    <property type="evidence" value="ECO:0007669"/>
    <property type="project" value="UniProtKB-UniRule"/>
</dbReference>
<dbReference type="GO" id="GO:0003899">
    <property type="term" value="F:DNA-directed RNA polymerase activity"/>
    <property type="evidence" value="ECO:0007669"/>
    <property type="project" value="UniProtKB-UniRule"/>
</dbReference>
<dbReference type="GO" id="GO:0032549">
    <property type="term" value="F:ribonucleoside binding"/>
    <property type="evidence" value="ECO:0007669"/>
    <property type="project" value="InterPro"/>
</dbReference>
<dbReference type="GO" id="GO:0006351">
    <property type="term" value="P:DNA-templated transcription"/>
    <property type="evidence" value="ECO:0007669"/>
    <property type="project" value="UniProtKB-UniRule"/>
</dbReference>
<dbReference type="CDD" id="cd00653">
    <property type="entry name" value="RNA_pol_B_RPB2"/>
    <property type="match status" value="1"/>
</dbReference>
<dbReference type="FunFam" id="2.30.150.10:FF:000001">
    <property type="entry name" value="DNA-directed RNA polymerase subunit beta"/>
    <property type="match status" value="1"/>
</dbReference>
<dbReference type="FunFam" id="2.40.270.10:FF:000003">
    <property type="entry name" value="DNA-directed RNA polymerase subunit beta"/>
    <property type="match status" value="1"/>
</dbReference>
<dbReference type="FunFam" id="2.40.270.10:FF:000004">
    <property type="entry name" value="DNA-directed RNA polymerase subunit beta"/>
    <property type="match status" value="1"/>
</dbReference>
<dbReference type="FunFam" id="2.40.50.100:FF:000006">
    <property type="entry name" value="DNA-directed RNA polymerase subunit beta"/>
    <property type="match status" value="1"/>
</dbReference>
<dbReference type="FunFam" id="2.40.50.150:FF:000001">
    <property type="entry name" value="DNA-directed RNA polymerase subunit beta"/>
    <property type="match status" value="1"/>
</dbReference>
<dbReference type="FunFam" id="3.90.1100.10:FF:000002">
    <property type="entry name" value="DNA-directed RNA polymerase subunit beta"/>
    <property type="match status" value="1"/>
</dbReference>
<dbReference type="FunFam" id="3.90.1110.10:FF:000001">
    <property type="entry name" value="DNA-directed RNA polymerase subunit beta"/>
    <property type="match status" value="1"/>
</dbReference>
<dbReference type="FunFam" id="3.90.1110.10:FF:000004">
    <property type="entry name" value="DNA-directed RNA polymerase subunit beta"/>
    <property type="match status" value="1"/>
</dbReference>
<dbReference type="FunFam" id="3.90.1800.10:FF:000001">
    <property type="entry name" value="DNA-directed RNA polymerase subunit beta"/>
    <property type="match status" value="1"/>
</dbReference>
<dbReference type="Gene3D" id="2.40.50.100">
    <property type="match status" value="1"/>
</dbReference>
<dbReference type="Gene3D" id="2.40.50.150">
    <property type="match status" value="1"/>
</dbReference>
<dbReference type="Gene3D" id="3.90.1100.10">
    <property type="match status" value="2"/>
</dbReference>
<dbReference type="Gene3D" id="6.10.140.1670">
    <property type="match status" value="1"/>
</dbReference>
<dbReference type="Gene3D" id="2.30.150.10">
    <property type="entry name" value="DNA-directed RNA polymerase, beta subunit, external 1 domain"/>
    <property type="match status" value="1"/>
</dbReference>
<dbReference type="Gene3D" id="2.40.270.10">
    <property type="entry name" value="DNA-directed RNA polymerase, subunit 2, domain 6"/>
    <property type="match status" value="1"/>
</dbReference>
<dbReference type="Gene3D" id="3.90.1800.10">
    <property type="entry name" value="RNA polymerase alpha subunit dimerisation domain"/>
    <property type="match status" value="1"/>
</dbReference>
<dbReference type="Gene3D" id="3.90.1110.10">
    <property type="entry name" value="RNA polymerase Rpb2, domain 2"/>
    <property type="match status" value="1"/>
</dbReference>
<dbReference type="HAMAP" id="MF_01321">
    <property type="entry name" value="RNApol_bact_RpoB"/>
    <property type="match status" value="1"/>
</dbReference>
<dbReference type="InterPro" id="IPR042107">
    <property type="entry name" value="DNA-dir_RNA_pol_bsu_ext_1_sf"/>
</dbReference>
<dbReference type="InterPro" id="IPR019462">
    <property type="entry name" value="DNA-dir_RNA_pol_bsu_external_1"/>
</dbReference>
<dbReference type="InterPro" id="IPR015712">
    <property type="entry name" value="DNA-dir_RNA_pol_su2"/>
</dbReference>
<dbReference type="InterPro" id="IPR007120">
    <property type="entry name" value="DNA-dir_RNAP_su2_dom"/>
</dbReference>
<dbReference type="InterPro" id="IPR037033">
    <property type="entry name" value="DNA-dir_RNAP_su2_hyb_sf"/>
</dbReference>
<dbReference type="InterPro" id="IPR010243">
    <property type="entry name" value="RNA_pol_bsu_bac"/>
</dbReference>
<dbReference type="InterPro" id="IPR007121">
    <property type="entry name" value="RNA_pol_bsu_CS"/>
</dbReference>
<dbReference type="InterPro" id="IPR007644">
    <property type="entry name" value="RNA_pol_bsu_protrusion"/>
</dbReference>
<dbReference type="InterPro" id="IPR007642">
    <property type="entry name" value="RNA_pol_Rpb2_2"/>
</dbReference>
<dbReference type="InterPro" id="IPR037034">
    <property type="entry name" value="RNA_pol_Rpb2_2_sf"/>
</dbReference>
<dbReference type="InterPro" id="IPR007645">
    <property type="entry name" value="RNA_pol_Rpb2_3"/>
</dbReference>
<dbReference type="InterPro" id="IPR007641">
    <property type="entry name" value="RNA_pol_Rpb2_7"/>
</dbReference>
<dbReference type="InterPro" id="IPR014724">
    <property type="entry name" value="RNA_pol_RPB2_OB-fold"/>
</dbReference>
<dbReference type="NCBIfam" id="NF001616">
    <property type="entry name" value="PRK00405.1"/>
    <property type="match status" value="1"/>
</dbReference>
<dbReference type="NCBIfam" id="TIGR02013">
    <property type="entry name" value="rpoB"/>
    <property type="match status" value="1"/>
</dbReference>
<dbReference type="PANTHER" id="PTHR20856">
    <property type="entry name" value="DNA-DIRECTED RNA POLYMERASE I SUBUNIT 2"/>
    <property type="match status" value="1"/>
</dbReference>
<dbReference type="Pfam" id="PF04563">
    <property type="entry name" value="RNA_pol_Rpb2_1"/>
    <property type="match status" value="1"/>
</dbReference>
<dbReference type="Pfam" id="PF04561">
    <property type="entry name" value="RNA_pol_Rpb2_2"/>
    <property type="match status" value="2"/>
</dbReference>
<dbReference type="Pfam" id="PF04565">
    <property type="entry name" value="RNA_pol_Rpb2_3"/>
    <property type="match status" value="1"/>
</dbReference>
<dbReference type="Pfam" id="PF10385">
    <property type="entry name" value="RNA_pol_Rpb2_45"/>
    <property type="match status" value="1"/>
</dbReference>
<dbReference type="Pfam" id="PF00562">
    <property type="entry name" value="RNA_pol_Rpb2_6"/>
    <property type="match status" value="1"/>
</dbReference>
<dbReference type="Pfam" id="PF04560">
    <property type="entry name" value="RNA_pol_Rpb2_7"/>
    <property type="match status" value="1"/>
</dbReference>
<dbReference type="SUPFAM" id="SSF64484">
    <property type="entry name" value="beta and beta-prime subunits of DNA dependent RNA-polymerase"/>
    <property type="match status" value="1"/>
</dbReference>
<dbReference type="PROSITE" id="PS01166">
    <property type="entry name" value="RNA_POL_BETA"/>
    <property type="match status" value="1"/>
</dbReference>